<gene>
    <name evidence="1" type="primary">atpE</name>
    <name type="ordered locus">SG2409</name>
</gene>
<keyword id="KW-0066">ATP synthesis</keyword>
<keyword id="KW-0997">Cell inner membrane</keyword>
<keyword id="KW-1003">Cell membrane</keyword>
<keyword id="KW-0138">CF(0)</keyword>
<keyword id="KW-0375">Hydrogen ion transport</keyword>
<keyword id="KW-0406">Ion transport</keyword>
<keyword id="KW-0446">Lipid-binding</keyword>
<keyword id="KW-0472">Membrane</keyword>
<keyword id="KW-0812">Transmembrane</keyword>
<keyword id="KW-1133">Transmembrane helix</keyword>
<keyword id="KW-0813">Transport</keyword>
<proteinExistence type="inferred from homology"/>
<organism>
    <name type="scientific">Sodalis glossinidius (strain morsitans)</name>
    <dbReference type="NCBI Taxonomy" id="343509"/>
    <lineage>
        <taxon>Bacteria</taxon>
        <taxon>Pseudomonadati</taxon>
        <taxon>Pseudomonadota</taxon>
        <taxon>Gammaproteobacteria</taxon>
        <taxon>Enterobacterales</taxon>
        <taxon>Bruguierivoracaceae</taxon>
        <taxon>Sodalis</taxon>
    </lineage>
</organism>
<name>ATPL_SODGM</name>
<dbReference type="EMBL" id="AP008232">
    <property type="protein sequence ID" value="BAE75684.1"/>
    <property type="molecule type" value="Genomic_DNA"/>
</dbReference>
<dbReference type="RefSeq" id="WP_000429386.1">
    <property type="nucleotide sequence ID" value="NZ_LN854557.1"/>
</dbReference>
<dbReference type="SMR" id="Q2NQ91"/>
<dbReference type="STRING" id="343509.SG2409"/>
<dbReference type="GeneID" id="98390858"/>
<dbReference type="KEGG" id="sgl:SG2409"/>
<dbReference type="eggNOG" id="ENOG5032S3K">
    <property type="taxonomic scope" value="Bacteria"/>
</dbReference>
<dbReference type="HOGENOM" id="CLU_148047_1_0_6"/>
<dbReference type="OrthoDB" id="9811659at2"/>
<dbReference type="BioCyc" id="SGLO343509:SGP1_RS21860-MONOMER"/>
<dbReference type="Proteomes" id="UP000001932">
    <property type="component" value="Chromosome"/>
</dbReference>
<dbReference type="GO" id="GO:0005886">
    <property type="term" value="C:plasma membrane"/>
    <property type="evidence" value="ECO:0007669"/>
    <property type="project" value="UniProtKB-SubCell"/>
</dbReference>
<dbReference type="GO" id="GO:0045259">
    <property type="term" value="C:proton-transporting ATP synthase complex"/>
    <property type="evidence" value="ECO:0007669"/>
    <property type="project" value="UniProtKB-KW"/>
</dbReference>
<dbReference type="GO" id="GO:0033177">
    <property type="term" value="C:proton-transporting two-sector ATPase complex, proton-transporting domain"/>
    <property type="evidence" value="ECO:0007669"/>
    <property type="project" value="InterPro"/>
</dbReference>
<dbReference type="GO" id="GO:0008289">
    <property type="term" value="F:lipid binding"/>
    <property type="evidence" value="ECO:0007669"/>
    <property type="project" value="UniProtKB-KW"/>
</dbReference>
<dbReference type="GO" id="GO:0046933">
    <property type="term" value="F:proton-transporting ATP synthase activity, rotational mechanism"/>
    <property type="evidence" value="ECO:0007669"/>
    <property type="project" value="UniProtKB-UniRule"/>
</dbReference>
<dbReference type="CDD" id="cd18185">
    <property type="entry name" value="ATP-synt_Fo_c_ATPE"/>
    <property type="match status" value="1"/>
</dbReference>
<dbReference type="FunFam" id="1.20.20.10:FF:000002">
    <property type="entry name" value="ATP synthase subunit c"/>
    <property type="match status" value="1"/>
</dbReference>
<dbReference type="Gene3D" id="1.20.20.10">
    <property type="entry name" value="F1F0 ATP synthase subunit C"/>
    <property type="match status" value="1"/>
</dbReference>
<dbReference type="HAMAP" id="MF_01396">
    <property type="entry name" value="ATP_synth_c_bact"/>
    <property type="match status" value="1"/>
</dbReference>
<dbReference type="InterPro" id="IPR005953">
    <property type="entry name" value="ATP_synth_csu_bac/chlpt"/>
</dbReference>
<dbReference type="InterPro" id="IPR000454">
    <property type="entry name" value="ATP_synth_F0_csu"/>
</dbReference>
<dbReference type="InterPro" id="IPR020537">
    <property type="entry name" value="ATP_synth_F0_csu_DDCD_BS"/>
</dbReference>
<dbReference type="InterPro" id="IPR038662">
    <property type="entry name" value="ATP_synth_F0_csu_sf"/>
</dbReference>
<dbReference type="InterPro" id="IPR002379">
    <property type="entry name" value="ATPase_proteolipid_c-like_dom"/>
</dbReference>
<dbReference type="InterPro" id="IPR035921">
    <property type="entry name" value="F/V-ATP_Csub_sf"/>
</dbReference>
<dbReference type="NCBIfam" id="TIGR01260">
    <property type="entry name" value="ATP_synt_c"/>
    <property type="match status" value="1"/>
</dbReference>
<dbReference type="NCBIfam" id="NF005363">
    <property type="entry name" value="PRK06876.1"/>
    <property type="match status" value="1"/>
</dbReference>
<dbReference type="Pfam" id="PF00137">
    <property type="entry name" value="ATP-synt_C"/>
    <property type="match status" value="1"/>
</dbReference>
<dbReference type="PRINTS" id="PR00124">
    <property type="entry name" value="ATPASEC"/>
</dbReference>
<dbReference type="SUPFAM" id="SSF81333">
    <property type="entry name" value="F1F0 ATP synthase subunit C"/>
    <property type="match status" value="1"/>
</dbReference>
<dbReference type="PROSITE" id="PS00605">
    <property type="entry name" value="ATPASE_C"/>
    <property type="match status" value="1"/>
</dbReference>
<accession>Q2NQ91</accession>
<comment type="function">
    <text evidence="1">F(1)F(0) ATP synthase produces ATP from ADP in the presence of a proton or sodium gradient. F-type ATPases consist of two structural domains, F(1) containing the extramembraneous catalytic core and F(0) containing the membrane proton channel, linked together by a central stalk and a peripheral stalk. During catalysis, ATP synthesis in the catalytic domain of F(1) is coupled via a rotary mechanism of the central stalk subunits to proton translocation.</text>
</comment>
<comment type="function">
    <text evidence="1">Key component of the F(0) channel; it plays a direct role in translocation across the membrane. A homomeric c-ring of between 10-14 subunits forms the central stalk rotor element with the F(1) delta and epsilon subunits.</text>
</comment>
<comment type="subunit">
    <text evidence="1">F-type ATPases have 2 components, F(1) - the catalytic core - and F(0) - the membrane proton channel. F(1) has five subunits: alpha(3), beta(3), gamma(1), delta(1), epsilon(1). F(0) has three main subunits: a(1), b(2) and c(10-14). The alpha and beta chains form an alternating ring which encloses part of the gamma chain. F(1) is attached to F(0) by a central stalk formed by the gamma and epsilon chains, while a peripheral stalk is formed by the delta and b chains.</text>
</comment>
<comment type="subcellular location">
    <subcellularLocation>
        <location evidence="1">Cell inner membrane</location>
        <topology evidence="1">Multi-pass membrane protein</topology>
    </subcellularLocation>
</comment>
<comment type="similarity">
    <text evidence="1">Belongs to the ATPase C chain family.</text>
</comment>
<evidence type="ECO:0000255" key="1">
    <source>
        <dbReference type="HAMAP-Rule" id="MF_01396"/>
    </source>
</evidence>
<reference key="1">
    <citation type="journal article" date="2006" name="Genome Res.">
        <title>Massive genome erosion and functional adaptations provide insights into the symbiotic lifestyle of Sodalis glossinidius in the tsetse host.</title>
        <authorList>
            <person name="Toh H."/>
            <person name="Weiss B.L."/>
            <person name="Perkin S.A.H."/>
            <person name="Yamashita A."/>
            <person name="Oshima K."/>
            <person name="Hattori M."/>
            <person name="Aksoy S."/>
        </authorList>
    </citation>
    <scope>NUCLEOTIDE SEQUENCE [LARGE SCALE GENOMIC DNA]</scope>
    <source>
        <strain>morsitans</strain>
    </source>
</reference>
<feature type="chain" id="PRO_1000184492" description="ATP synthase subunit c">
    <location>
        <begin position="1"/>
        <end position="79"/>
    </location>
</feature>
<feature type="transmembrane region" description="Helical" evidence="1">
    <location>
        <begin position="11"/>
        <end position="31"/>
    </location>
</feature>
<feature type="transmembrane region" description="Helical" evidence="1">
    <location>
        <begin position="53"/>
        <end position="73"/>
    </location>
</feature>
<feature type="site" description="Reversibly protonated during proton transport" evidence="1">
    <location>
        <position position="61"/>
    </location>
</feature>
<protein>
    <recommendedName>
        <fullName evidence="1">ATP synthase subunit c</fullName>
    </recommendedName>
    <alternativeName>
        <fullName evidence="1">ATP synthase F(0) sector subunit c</fullName>
    </alternativeName>
    <alternativeName>
        <fullName evidence="1">F-type ATPase subunit c</fullName>
        <shortName evidence="1">F-ATPase subunit c</shortName>
    </alternativeName>
    <alternativeName>
        <fullName evidence="1">Lipid-binding protein</fullName>
    </alternativeName>
</protein>
<sequence length="79" mass="8256">MENLNMDLLYMAAAVMMGLAAIGAAIGIGILGGKFLEGAARQPDLIPLLRTQFFIVMGLVDAIPMIAVGLGLYVMFAVA</sequence>